<protein>
    <recommendedName>
        <fullName evidence="1">Valine--tRNA ligase</fullName>
        <ecNumber evidence="1">6.1.1.9</ecNumber>
    </recommendedName>
    <alternativeName>
        <fullName evidence="1">Valyl-tRNA synthetase</fullName>
        <shortName evidence="1">ValRS</shortName>
    </alternativeName>
</protein>
<name>SYV_CAMJR</name>
<comment type="function">
    <text evidence="1">Catalyzes the attachment of valine to tRNA(Val). As ValRS can inadvertently accommodate and process structurally similar amino acids such as threonine, to avoid such errors, it has a 'posttransfer' editing activity that hydrolyzes mischarged Thr-tRNA(Val) in a tRNA-dependent manner.</text>
</comment>
<comment type="catalytic activity">
    <reaction evidence="1">
        <text>tRNA(Val) + L-valine + ATP = L-valyl-tRNA(Val) + AMP + diphosphate</text>
        <dbReference type="Rhea" id="RHEA:10704"/>
        <dbReference type="Rhea" id="RHEA-COMP:9672"/>
        <dbReference type="Rhea" id="RHEA-COMP:9708"/>
        <dbReference type="ChEBI" id="CHEBI:30616"/>
        <dbReference type="ChEBI" id="CHEBI:33019"/>
        <dbReference type="ChEBI" id="CHEBI:57762"/>
        <dbReference type="ChEBI" id="CHEBI:78442"/>
        <dbReference type="ChEBI" id="CHEBI:78537"/>
        <dbReference type="ChEBI" id="CHEBI:456215"/>
        <dbReference type="EC" id="6.1.1.9"/>
    </reaction>
</comment>
<comment type="subunit">
    <text evidence="1">Monomer.</text>
</comment>
<comment type="subcellular location">
    <subcellularLocation>
        <location evidence="1">Cytoplasm</location>
    </subcellularLocation>
</comment>
<comment type="domain">
    <text evidence="1">ValRS has two distinct active sites: one for aminoacylation and one for editing. The misactivated threonine is translocated from the active site to the editing site.</text>
</comment>
<comment type="domain">
    <text evidence="1">The C-terminal coiled-coil domain is crucial for aminoacylation activity.</text>
</comment>
<comment type="similarity">
    <text evidence="1">Belongs to the class-I aminoacyl-tRNA synthetase family. ValS type 1 subfamily.</text>
</comment>
<gene>
    <name evidence="1" type="primary">valS</name>
    <name type="ordered locus">CJE0866</name>
</gene>
<reference key="1">
    <citation type="journal article" date="2005" name="PLoS Biol.">
        <title>Major structural differences and novel potential virulence mechanisms from the genomes of multiple Campylobacter species.</title>
        <authorList>
            <person name="Fouts D.E."/>
            <person name="Mongodin E.F."/>
            <person name="Mandrell R.E."/>
            <person name="Miller W.G."/>
            <person name="Rasko D.A."/>
            <person name="Ravel J."/>
            <person name="Brinkac L.M."/>
            <person name="DeBoy R.T."/>
            <person name="Parker C.T."/>
            <person name="Daugherty S.C."/>
            <person name="Dodson R.J."/>
            <person name="Durkin A.S."/>
            <person name="Madupu R."/>
            <person name="Sullivan S.A."/>
            <person name="Shetty J.U."/>
            <person name="Ayodeji M.A."/>
            <person name="Shvartsbeyn A."/>
            <person name="Schatz M.C."/>
            <person name="Badger J.H."/>
            <person name="Fraser C.M."/>
            <person name="Nelson K.E."/>
        </authorList>
    </citation>
    <scope>NUCLEOTIDE SEQUENCE [LARGE SCALE GENOMIC DNA]</scope>
    <source>
        <strain>RM1221</strain>
    </source>
</reference>
<dbReference type="EC" id="6.1.1.9" evidence="1"/>
<dbReference type="EMBL" id="CP000025">
    <property type="protein sequence ID" value="AAW35203.1"/>
    <property type="molecule type" value="Genomic_DNA"/>
</dbReference>
<dbReference type="RefSeq" id="WP_002920212.1">
    <property type="nucleotide sequence ID" value="NC_003912.7"/>
</dbReference>
<dbReference type="SMR" id="Q5HV17"/>
<dbReference type="KEGG" id="cjr:CJE0866"/>
<dbReference type="HOGENOM" id="CLU_001493_0_2_7"/>
<dbReference type="GO" id="GO:0005829">
    <property type="term" value="C:cytosol"/>
    <property type="evidence" value="ECO:0007669"/>
    <property type="project" value="TreeGrafter"/>
</dbReference>
<dbReference type="GO" id="GO:0002161">
    <property type="term" value="F:aminoacyl-tRNA deacylase activity"/>
    <property type="evidence" value="ECO:0007669"/>
    <property type="project" value="InterPro"/>
</dbReference>
<dbReference type="GO" id="GO:0005524">
    <property type="term" value="F:ATP binding"/>
    <property type="evidence" value="ECO:0007669"/>
    <property type="project" value="UniProtKB-UniRule"/>
</dbReference>
<dbReference type="GO" id="GO:0004832">
    <property type="term" value="F:valine-tRNA ligase activity"/>
    <property type="evidence" value="ECO:0007669"/>
    <property type="project" value="UniProtKB-UniRule"/>
</dbReference>
<dbReference type="GO" id="GO:0006438">
    <property type="term" value="P:valyl-tRNA aminoacylation"/>
    <property type="evidence" value="ECO:0007669"/>
    <property type="project" value="UniProtKB-UniRule"/>
</dbReference>
<dbReference type="CDD" id="cd07962">
    <property type="entry name" value="Anticodon_Ia_Val"/>
    <property type="match status" value="1"/>
</dbReference>
<dbReference type="CDD" id="cd00817">
    <property type="entry name" value="ValRS_core"/>
    <property type="match status" value="1"/>
</dbReference>
<dbReference type="FunFam" id="3.40.50.620:FF:000382">
    <property type="entry name" value="Valine--tRNA ligase"/>
    <property type="match status" value="1"/>
</dbReference>
<dbReference type="FunFam" id="3.90.740.10:FF:000005">
    <property type="entry name" value="Valine--tRNA ligase, mitochondrial"/>
    <property type="match status" value="1"/>
</dbReference>
<dbReference type="Gene3D" id="2.170.220.10">
    <property type="match status" value="1"/>
</dbReference>
<dbReference type="Gene3D" id="3.40.50.620">
    <property type="entry name" value="HUPs"/>
    <property type="match status" value="2"/>
</dbReference>
<dbReference type="Gene3D" id="1.10.730.10">
    <property type="entry name" value="Isoleucyl-tRNA Synthetase, Domain 1"/>
    <property type="match status" value="1"/>
</dbReference>
<dbReference type="Gene3D" id="1.10.287.380">
    <property type="entry name" value="Valyl-tRNA synthetase, C-terminal domain"/>
    <property type="match status" value="1"/>
</dbReference>
<dbReference type="Gene3D" id="3.90.740.10">
    <property type="entry name" value="Valyl/Leucyl/Isoleucyl-tRNA synthetase, editing domain"/>
    <property type="match status" value="1"/>
</dbReference>
<dbReference type="HAMAP" id="MF_02004">
    <property type="entry name" value="Val_tRNA_synth_type1"/>
    <property type="match status" value="1"/>
</dbReference>
<dbReference type="InterPro" id="IPR001412">
    <property type="entry name" value="aa-tRNA-synth_I_CS"/>
</dbReference>
<dbReference type="InterPro" id="IPR002300">
    <property type="entry name" value="aa-tRNA-synth_Ia"/>
</dbReference>
<dbReference type="InterPro" id="IPR033705">
    <property type="entry name" value="Anticodon_Ia_Val"/>
</dbReference>
<dbReference type="InterPro" id="IPR013155">
    <property type="entry name" value="M/V/L/I-tRNA-synth_anticd-bd"/>
</dbReference>
<dbReference type="InterPro" id="IPR014729">
    <property type="entry name" value="Rossmann-like_a/b/a_fold"/>
</dbReference>
<dbReference type="InterPro" id="IPR010978">
    <property type="entry name" value="tRNA-bd_arm"/>
</dbReference>
<dbReference type="InterPro" id="IPR009080">
    <property type="entry name" value="tRNAsynth_Ia_anticodon-bd"/>
</dbReference>
<dbReference type="InterPro" id="IPR037118">
    <property type="entry name" value="Val-tRNA_synth_C_sf"/>
</dbReference>
<dbReference type="InterPro" id="IPR019499">
    <property type="entry name" value="Val-tRNA_synth_tRNA-bd"/>
</dbReference>
<dbReference type="InterPro" id="IPR009008">
    <property type="entry name" value="Val/Leu/Ile-tRNA-synth_edit"/>
</dbReference>
<dbReference type="InterPro" id="IPR002303">
    <property type="entry name" value="Valyl-tRNA_ligase"/>
</dbReference>
<dbReference type="NCBIfam" id="NF004349">
    <property type="entry name" value="PRK05729.1"/>
    <property type="match status" value="1"/>
</dbReference>
<dbReference type="NCBIfam" id="TIGR00422">
    <property type="entry name" value="valS"/>
    <property type="match status" value="1"/>
</dbReference>
<dbReference type="PANTHER" id="PTHR11946:SF93">
    <property type="entry name" value="VALINE--TRNA LIGASE, CHLOROPLASTIC_MITOCHONDRIAL 2"/>
    <property type="match status" value="1"/>
</dbReference>
<dbReference type="PANTHER" id="PTHR11946">
    <property type="entry name" value="VALYL-TRNA SYNTHETASES"/>
    <property type="match status" value="1"/>
</dbReference>
<dbReference type="Pfam" id="PF08264">
    <property type="entry name" value="Anticodon_1"/>
    <property type="match status" value="1"/>
</dbReference>
<dbReference type="Pfam" id="PF00133">
    <property type="entry name" value="tRNA-synt_1"/>
    <property type="match status" value="1"/>
</dbReference>
<dbReference type="Pfam" id="PF10458">
    <property type="entry name" value="Val_tRNA-synt_C"/>
    <property type="match status" value="1"/>
</dbReference>
<dbReference type="PRINTS" id="PR00986">
    <property type="entry name" value="TRNASYNTHVAL"/>
</dbReference>
<dbReference type="SUPFAM" id="SSF47323">
    <property type="entry name" value="Anticodon-binding domain of a subclass of class I aminoacyl-tRNA synthetases"/>
    <property type="match status" value="1"/>
</dbReference>
<dbReference type="SUPFAM" id="SSF52374">
    <property type="entry name" value="Nucleotidylyl transferase"/>
    <property type="match status" value="1"/>
</dbReference>
<dbReference type="SUPFAM" id="SSF46589">
    <property type="entry name" value="tRNA-binding arm"/>
    <property type="match status" value="1"/>
</dbReference>
<dbReference type="SUPFAM" id="SSF50677">
    <property type="entry name" value="ValRS/IleRS/LeuRS editing domain"/>
    <property type="match status" value="1"/>
</dbReference>
<dbReference type="PROSITE" id="PS00178">
    <property type="entry name" value="AA_TRNA_LIGASE_I"/>
    <property type="match status" value="1"/>
</dbReference>
<accession>Q5HV17</accession>
<proteinExistence type="inferred from homology"/>
<feature type="chain" id="PRO_0000224454" description="Valine--tRNA ligase">
    <location>
        <begin position="1"/>
        <end position="870"/>
    </location>
</feature>
<feature type="coiled-coil region" evidence="1">
    <location>
        <begin position="800"/>
        <end position="870"/>
    </location>
</feature>
<feature type="short sequence motif" description="'HIGH' region">
    <location>
        <begin position="42"/>
        <end position="52"/>
    </location>
</feature>
<feature type="short sequence motif" description="'KMSKS' region">
    <location>
        <begin position="527"/>
        <end position="531"/>
    </location>
</feature>
<feature type="binding site" evidence="1">
    <location>
        <position position="530"/>
    </location>
    <ligand>
        <name>ATP</name>
        <dbReference type="ChEBI" id="CHEBI:30616"/>
    </ligand>
</feature>
<keyword id="KW-0030">Aminoacyl-tRNA synthetase</keyword>
<keyword id="KW-0067">ATP-binding</keyword>
<keyword id="KW-0175">Coiled coil</keyword>
<keyword id="KW-0963">Cytoplasm</keyword>
<keyword id="KW-0436">Ligase</keyword>
<keyword id="KW-0547">Nucleotide-binding</keyword>
<keyword id="KW-0648">Protein biosynthesis</keyword>
<organism>
    <name type="scientific">Campylobacter jejuni (strain RM1221)</name>
    <dbReference type="NCBI Taxonomy" id="195099"/>
    <lineage>
        <taxon>Bacteria</taxon>
        <taxon>Pseudomonadati</taxon>
        <taxon>Campylobacterota</taxon>
        <taxon>Epsilonproteobacteria</taxon>
        <taxon>Campylobacterales</taxon>
        <taxon>Campylobacteraceae</taxon>
        <taxon>Campylobacter</taxon>
    </lineage>
</organism>
<evidence type="ECO:0000255" key="1">
    <source>
        <dbReference type="HAMAP-Rule" id="MF_02004"/>
    </source>
</evidence>
<sequence length="870" mass="101782">MYDKNLEKEYYQICEERGYFEIDGNKTIQEKDKNFCIMMPPPNVTGVLHIGHALTFTLQDIMTRYKRMDGYKVLYQPGLDHAGIATQNVVEKQLLAQGIKKEELGREEFIEKVWEWKEQSGGKILDQMRTLGITPAWSRLRFTMDEGLVNAVKKAFVELYDKRLIVRGNYMINWCTHDGALSDIEVEYKENKGKLYHIKYFLKDSDEFLVVATTRPETFFGDTAVMVHPDDERYAKFVDKEVILPISKKAIKIIADEHVEKEFGTGVVKVTPAHDMNDYEVGLRHNLDFISVFDEKGILNEHCLEFQGLERLEAREKIVAKLESLGFIEKIEEYNNQIGYCYRCNNIVEPYISKQWFVKKEIAQESIEKVALGESKFYPNHWINSFNAWMKDLRDWCISRQLWWGHQIPVYYCECSHEWASQHTPKTCPKCQSQNFKQDEDVLDTWFSSGLWAMSTLGWGNENWGKDKIWSEKDLKDFYPNSLLITGFDILFFWVARMMFQSTNVLHQLPFKDIYLHALVKDEQGRKMSKSLGNVIDPNESIKEYSADILRFTLALLAIQGRDIKLSNDKLLQVRNFTNKIYNAKNYLLLNESKFEDLENITLHSELAKYIYAKFQTCVKDVRENLDNYRFNDAANTLYKFFWDDFCDWGIELSKAEKSSVKELGSIFKEALKLLNPFMPFISEYLYHKLSDTELKTSPSIMISKYPKFKEQDKNIEKIFSLLIESIVSIRRAKSLIDLGNSKIEKAYIKFNDKKIKDEIKAYMNFIIMLAKCEQIEFSEEKLPKAICDVSENLEIFITLENVDLSGILTRLENQKNKLEKESFKLNSMLSNEKFIANAPKEVVEQNKEALENLKIQLEKISVELQNLRG</sequence>